<name>HLDE_CAMJR</name>
<feature type="chain" id="PRO_0000255754" description="Bifunctional protein HldE">
    <location>
        <begin position="1"/>
        <end position="461"/>
    </location>
</feature>
<feature type="region of interest" description="Ribokinase">
    <location>
        <begin position="1"/>
        <end position="312"/>
    </location>
</feature>
<feature type="region of interest" description="Cytidylyltransferase">
    <location>
        <begin position="334"/>
        <end position="461"/>
    </location>
</feature>
<feature type="active site" evidence="1">
    <location>
        <position position="259"/>
    </location>
</feature>
<feature type="binding site" evidence="1">
    <location>
        <begin position="191"/>
        <end position="194"/>
    </location>
    <ligand>
        <name>ATP</name>
        <dbReference type="ChEBI" id="CHEBI:30616"/>
    </ligand>
</feature>
<organism>
    <name type="scientific">Campylobacter jejuni (strain RM1221)</name>
    <dbReference type="NCBI Taxonomy" id="195099"/>
    <lineage>
        <taxon>Bacteria</taxon>
        <taxon>Pseudomonadati</taxon>
        <taxon>Campylobacterota</taxon>
        <taxon>Epsilonproteobacteria</taxon>
        <taxon>Campylobacterales</taxon>
        <taxon>Campylobacteraceae</taxon>
        <taxon>Campylobacter</taxon>
    </lineage>
</organism>
<keyword id="KW-0067">ATP-binding</keyword>
<keyword id="KW-0119">Carbohydrate metabolism</keyword>
<keyword id="KW-0418">Kinase</keyword>
<keyword id="KW-0511">Multifunctional enzyme</keyword>
<keyword id="KW-0547">Nucleotide-binding</keyword>
<keyword id="KW-0548">Nucleotidyltransferase</keyword>
<keyword id="KW-0808">Transferase</keyword>
<evidence type="ECO:0000255" key="1">
    <source>
        <dbReference type="HAMAP-Rule" id="MF_01603"/>
    </source>
</evidence>
<sequence length="461" mass="51216">MLEFLSQQKPKILIIGDFMVDNYTWCDCSRISPEAPVLVAKTLKEDKRLGGAANVYANLKSLGADVFALGVVGDDKSGKFLQENLKGEFLIQKGRKTPFKNRIMAHNQQVLRLDEEDISEILLENELIALFDEKIKDFKAVVLSDYAKGILTPKVCKAVIKKAKALNIPVLVDPKGSDFSKYSGATLLTPNKKEALEALKFENLEGENLEKGIKKLKEDFSLRYSIITLSEAGIALFNEGLKIAPAKALEVYDVTGAGDSVIAVLAFCLANEIEIFKACELANEAAAVVVSKIGSVSVSFDEIRSFKSMSFEKKIKNKEELLTLLKQNDKKIVFTNGCFDIVHFGHIKYLEKAKRLGDVLIVGLNSDASVKRLKGESRPVNSEFQRACMLAAFYFVDFVVIFDEDTPLELISFLKPDILVKGADYKDKLVVGSNLISRVELIDFEEGFSTSKIIEKIKDKK</sequence>
<accession>Q5HTW1</accession>
<reference key="1">
    <citation type="journal article" date="2005" name="PLoS Biol.">
        <title>Major structural differences and novel potential virulence mechanisms from the genomes of multiple Campylobacter species.</title>
        <authorList>
            <person name="Fouts D.E."/>
            <person name="Mongodin E.F."/>
            <person name="Mandrell R.E."/>
            <person name="Miller W.G."/>
            <person name="Rasko D.A."/>
            <person name="Ravel J."/>
            <person name="Brinkac L.M."/>
            <person name="DeBoy R.T."/>
            <person name="Parker C.T."/>
            <person name="Daugherty S.C."/>
            <person name="Dodson R.J."/>
            <person name="Durkin A.S."/>
            <person name="Madupu R."/>
            <person name="Sullivan S.A."/>
            <person name="Shetty J.U."/>
            <person name="Ayodeji M.A."/>
            <person name="Shvartsbeyn A."/>
            <person name="Schatz M.C."/>
            <person name="Badger J.H."/>
            <person name="Fraser C.M."/>
            <person name="Nelson K.E."/>
        </authorList>
    </citation>
    <scope>NUCLEOTIDE SEQUENCE [LARGE SCALE GENOMIC DNA]</scope>
    <source>
        <strain>RM1221</strain>
    </source>
</reference>
<dbReference type="EC" id="2.7.1.167" evidence="1"/>
<dbReference type="EC" id="2.7.7.70" evidence="1"/>
<dbReference type="EMBL" id="CP000025">
    <property type="protein sequence ID" value="AAW35608.1"/>
    <property type="molecule type" value="Genomic_DNA"/>
</dbReference>
<dbReference type="SMR" id="Q5HTW1"/>
<dbReference type="KEGG" id="cjr:CJE1286"/>
<dbReference type="HOGENOM" id="CLU_021150_2_1_7"/>
<dbReference type="UniPathway" id="UPA00356">
    <property type="reaction ID" value="UER00437"/>
</dbReference>
<dbReference type="UniPathway" id="UPA00356">
    <property type="reaction ID" value="UER00439"/>
</dbReference>
<dbReference type="GO" id="GO:0005829">
    <property type="term" value="C:cytosol"/>
    <property type="evidence" value="ECO:0007669"/>
    <property type="project" value="TreeGrafter"/>
</dbReference>
<dbReference type="GO" id="GO:0005524">
    <property type="term" value="F:ATP binding"/>
    <property type="evidence" value="ECO:0007669"/>
    <property type="project" value="UniProtKB-UniRule"/>
</dbReference>
<dbReference type="GO" id="GO:0033785">
    <property type="term" value="F:heptose 7-phosphate kinase activity"/>
    <property type="evidence" value="ECO:0007669"/>
    <property type="project" value="UniProtKB-UniRule"/>
</dbReference>
<dbReference type="GO" id="GO:0033786">
    <property type="term" value="F:heptose-1-phosphate adenylyltransferase activity"/>
    <property type="evidence" value="ECO:0007669"/>
    <property type="project" value="UniProtKB-UniRule"/>
</dbReference>
<dbReference type="GO" id="GO:0016773">
    <property type="term" value="F:phosphotransferase activity, alcohol group as acceptor"/>
    <property type="evidence" value="ECO:0007669"/>
    <property type="project" value="InterPro"/>
</dbReference>
<dbReference type="GO" id="GO:0097171">
    <property type="term" value="P:ADP-L-glycero-beta-D-manno-heptose biosynthetic process"/>
    <property type="evidence" value="ECO:0007669"/>
    <property type="project" value="UniProtKB-UniPathway"/>
</dbReference>
<dbReference type="CDD" id="cd01172">
    <property type="entry name" value="RfaE_like"/>
    <property type="match status" value="1"/>
</dbReference>
<dbReference type="FunFam" id="3.40.1190.20:FF:000084">
    <property type="entry name" value="Bifunctional protein HldE"/>
    <property type="match status" value="1"/>
</dbReference>
<dbReference type="FunFam" id="3.40.50.620:FF:000282">
    <property type="entry name" value="Bifunctional protein HldE"/>
    <property type="match status" value="1"/>
</dbReference>
<dbReference type="Gene3D" id="3.40.1190.20">
    <property type="match status" value="1"/>
</dbReference>
<dbReference type="Gene3D" id="3.40.50.620">
    <property type="entry name" value="HUPs"/>
    <property type="match status" value="1"/>
</dbReference>
<dbReference type="HAMAP" id="MF_01603">
    <property type="entry name" value="HldE"/>
    <property type="match status" value="1"/>
</dbReference>
<dbReference type="InterPro" id="IPR023030">
    <property type="entry name" value="Bifunc_HldE"/>
</dbReference>
<dbReference type="InterPro" id="IPR004821">
    <property type="entry name" value="Cyt_trans-like"/>
</dbReference>
<dbReference type="InterPro" id="IPR011611">
    <property type="entry name" value="PfkB_dom"/>
</dbReference>
<dbReference type="InterPro" id="IPR011913">
    <property type="entry name" value="RfaE_dom_I"/>
</dbReference>
<dbReference type="InterPro" id="IPR011914">
    <property type="entry name" value="RfaE_dom_II"/>
</dbReference>
<dbReference type="InterPro" id="IPR029056">
    <property type="entry name" value="Ribokinase-like"/>
</dbReference>
<dbReference type="InterPro" id="IPR014729">
    <property type="entry name" value="Rossmann-like_a/b/a_fold"/>
</dbReference>
<dbReference type="NCBIfam" id="TIGR00125">
    <property type="entry name" value="cyt_tran_rel"/>
    <property type="match status" value="1"/>
</dbReference>
<dbReference type="NCBIfam" id="TIGR02198">
    <property type="entry name" value="rfaE_dom_I"/>
    <property type="match status" value="1"/>
</dbReference>
<dbReference type="NCBIfam" id="TIGR02199">
    <property type="entry name" value="rfaE_dom_II"/>
    <property type="match status" value="1"/>
</dbReference>
<dbReference type="PANTHER" id="PTHR46969">
    <property type="entry name" value="BIFUNCTIONAL PROTEIN HLDE"/>
    <property type="match status" value="1"/>
</dbReference>
<dbReference type="PANTHER" id="PTHR46969:SF1">
    <property type="entry name" value="BIFUNCTIONAL PROTEIN HLDE"/>
    <property type="match status" value="1"/>
</dbReference>
<dbReference type="Pfam" id="PF01467">
    <property type="entry name" value="CTP_transf_like"/>
    <property type="match status" value="1"/>
</dbReference>
<dbReference type="Pfam" id="PF00294">
    <property type="entry name" value="PfkB"/>
    <property type="match status" value="1"/>
</dbReference>
<dbReference type="SUPFAM" id="SSF52374">
    <property type="entry name" value="Nucleotidylyl transferase"/>
    <property type="match status" value="1"/>
</dbReference>
<dbReference type="SUPFAM" id="SSF53613">
    <property type="entry name" value="Ribokinase-like"/>
    <property type="match status" value="1"/>
</dbReference>
<proteinExistence type="inferred from homology"/>
<gene>
    <name evidence="1" type="primary">hldE</name>
    <name type="ordered locus">CJE1286</name>
</gene>
<comment type="function">
    <text evidence="1">Catalyzes the phosphorylation of D-glycero-D-manno-heptose 7-phosphate at the C-1 position to selectively form D-glycero-beta-D-manno-heptose-1,7-bisphosphate.</text>
</comment>
<comment type="function">
    <text evidence="1">Catalyzes the ADP transfer from ATP to D-glycero-beta-D-manno-heptose 1-phosphate, yielding ADP-D-glycero-beta-D-manno-heptose.</text>
</comment>
<comment type="catalytic activity">
    <reaction evidence="1">
        <text>D-glycero-beta-D-manno-heptose 7-phosphate + ATP = D-glycero-beta-D-manno-heptose 1,7-bisphosphate + ADP + H(+)</text>
        <dbReference type="Rhea" id="RHEA:27473"/>
        <dbReference type="ChEBI" id="CHEBI:15378"/>
        <dbReference type="ChEBI" id="CHEBI:30616"/>
        <dbReference type="ChEBI" id="CHEBI:60204"/>
        <dbReference type="ChEBI" id="CHEBI:60208"/>
        <dbReference type="ChEBI" id="CHEBI:456216"/>
        <dbReference type="EC" id="2.7.1.167"/>
    </reaction>
</comment>
<comment type="catalytic activity">
    <reaction evidence="1">
        <text>D-glycero-beta-D-manno-heptose 1-phosphate + ATP + H(+) = ADP-D-glycero-beta-D-manno-heptose + diphosphate</text>
        <dbReference type="Rhea" id="RHEA:27465"/>
        <dbReference type="ChEBI" id="CHEBI:15378"/>
        <dbReference type="ChEBI" id="CHEBI:30616"/>
        <dbReference type="ChEBI" id="CHEBI:33019"/>
        <dbReference type="ChEBI" id="CHEBI:59967"/>
        <dbReference type="ChEBI" id="CHEBI:61593"/>
        <dbReference type="EC" id="2.7.7.70"/>
    </reaction>
</comment>
<comment type="pathway">
    <text evidence="1">Nucleotide-sugar biosynthesis; ADP-L-glycero-beta-D-manno-heptose biosynthesis; ADP-L-glycero-beta-D-manno-heptose from D-glycero-beta-D-manno-heptose 7-phosphate: step 1/4.</text>
</comment>
<comment type="pathway">
    <text evidence="1">Nucleotide-sugar biosynthesis; ADP-L-glycero-beta-D-manno-heptose biosynthesis; ADP-L-glycero-beta-D-manno-heptose from D-glycero-beta-D-manno-heptose 7-phosphate: step 3/4.</text>
</comment>
<comment type="subunit">
    <text evidence="1">Homodimer.</text>
</comment>
<comment type="similarity">
    <text evidence="1">In the N-terminal section; belongs to the carbohydrate kinase PfkB family.</text>
</comment>
<comment type="similarity">
    <text evidence="1">In the C-terminal section; belongs to the cytidylyltransferase family.</text>
</comment>
<protein>
    <recommendedName>
        <fullName evidence="1">Bifunctional protein HldE</fullName>
    </recommendedName>
    <domain>
        <recommendedName>
            <fullName evidence="1">D-beta-D-heptose 7-phosphate kinase</fullName>
            <ecNumber evidence="1">2.7.1.167</ecNumber>
        </recommendedName>
        <alternativeName>
            <fullName evidence="1">D-beta-D-heptose 7-phosphotransferase</fullName>
        </alternativeName>
        <alternativeName>
            <fullName evidence="1">D-glycero-beta-D-manno-heptose-7-phosphate kinase</fullName>
        </alternativeName>
    </domain>
    <domain>
        <recommendedName>
            <fullName evidence="1">D-beta-D-heptose 1-phosphate adenylyltransferase</fullName>
            <ecNumber evidence="1">2.7.7.70</ecNumber>
        </recommendedName>
        <alternativeName>
            <fullName evidence="1">D-glycero-beta-D-manno-heptose 1-phosphate adenylyltransferase</fullName>
        </alternativeName>
    </domain>
</protein>